<gene>
    <name type="primary">mutY</name>
    <name type="synonym">mutB</name>
    <name type="ordered locus">STM3110</name>
</gene>
<comment type="function">
    <text evidence="2">Adenine glycosylase active on G-A mispairs. MutY also corrects error-prone DNA synthesis past GO lesions which are due to the oxidatively damaged form of guanine: 7,8-dihydro-8-oxoguanine (8-oxo-dGTP).</text>
</comment>
<comment type="catalytic activity">
    <reaction evidence="2">
        <text>Hydrolyzes free adenine bases from 7,8-dihydro-8-oxoguanine:adenine mismatched double-stranded DNA, leaving an apurinic site.</text>
        <dbReference type="EC" id="3.2.2.31"/>
    </reaction>
</comment>
<comment type="cofactor">
    <cofactor evidence="2">
        <name>[4Fe-4S] cluster</name>
        <dbReference type="ChEBI" id="CHEBI:49883"/>
    </cofactor>
    <text evidence="2">Binds 1 [4Fe-4S] cluster. The cluster does not appear to play a role in catalysis, but is probably involved in the proper positioning of the enzyme along the DNA strand.</text>
</comment>
<comment type="subunit">
    <text evidence="2">Monomer.</text>
</comment>
<comment type="similarity">
    <text evidence="4">Belongs to the Nth/MutY family.</text>
</comment>
<name>MUTY_SALTY</name>
<organism>
    <name type="scientific">Salmonella typhimurium (strain LT2 / SGSC1412 / ATCC 700720)</name>
    <dbReference type="NCBI Taxonomy" id="99287"/>
    <lineage>
        <taxon>Bacteria</taxon>
        <taxon>Pseudomonadati</taxon>
        <taxon>Pseudomonadota</taxon>
        <taxon>Gammaproteobacteria</taxon>
        <taxon>Enterobacterales</taxon>
        <taxon>Enterobacteriaceae</taxon>
        <taxon>Salmonella</taxon>
    </lineage>
</organism>
<feature type="chain" id="PRO_0000102235" description="Adenine DNA glycosylase">
    <location>
        <begin position="1"/>
        <end position="350"/>
    </location>
</feature>
<feature type="active site" description="Proton donor/acceptor" evidence="3">
    <location>
        <position position="37"/>
    </location>
</feature>
<feature type="binding site" evidence="1">
    <location>
        <position position="192"/>
    </location>
    <ligand>
        <name>[4Fe-4S] cluster</name>
        <dbReference type="ChEBI" id="CHEBI:49883"/>
    </ligand>
</feature>
<feature type="binding site" evidence="1">
    <location>
        <position position="199"/>
    </location>
    <ligand>
        <name>[4Fe-4S] cluster</name>
        <dbReference type="ChEBI" id="CHEBI:49883"/>
    </ligand>
</feature>
<feature type="binding site" evidence="1">
    <location>
        <position position="202"/>
    </location>
    <ligand>
        <name>[4Fe-4S] cluster</name>
        <dbReference type="ChEBI" id="CHEBI:49883"/>
    </ligand>
</feature>
<feature type="binding site" evidence="1">
    <location>
        <position position="208"/>
    </location>
    <ligand>
        <name>[4Fe-4S] cluster</name>
        <dbReference type="ChEBI" id="CHEBI:49883"/>
    </ligand>
</feature>
<feature type="site" description="Transition state stabilizer" evidence="3">
    <location>
        <position position="138"/>
    </location>
</feature>
<sequence>MQASQFSAQVLDWYDKYGRKTLPWQINKTPYKVWLSEVMLQQTQVTTVIPYFERFMARFPTVTDLANAPLDEVLHLWTGLGYYARARNLHKAAQQVATLHGGEFPQTFAEIAALPGVGRSTAGAILSLALGKHYPILDGNVKRVLARCYAVSGWPGKKEVENTLWTLSEQVTPARGVERFNQAMMDLGAMVCTRSKPKCTLCPLQNGCIAAAHESWSRYPGKKPKQTLPERTGYFLLLQHNQEIFLAQRPPSGLWGGLYCFPQFAREDELREWLAQRHVNADNLTQLNAFRHTFSHFHLDIVPMWLPVSSLDACMDEGSALWYNLAQPPSVGLAAPVERLLQQLRTGAPV</sequence>
<protein>
    <recommendedName>
        <fullName>Adenine DNA glycosylase</fullName>
        <ecNumber evidence="2">3.2.2.31</ecNumber>
    </recommendedName>
</protein>
<proteinExistence type="inferred from homology"/>
<accession>Q05869</accession>
<keyword id="KW-0004">4Fe-4S</keyword>
<keyword id="KW-0227">DNA damage</keyword>
<keyword id="KW-0234">DNA repair</keyword>
<keyword id="KW-0326">Glycosidase</keyword>
<keyword id="KW-0378">Hydrolase</keyword>
<keyword id="KW-0408">Iron</keyword>
<keyword id="KW-0411">Iron-sulfur</keyword>
<keyword id="KW-0479">Metal-binding</keyword>
<keyword id="KW-1185">Reference proteome</keyword>
<evidence type="ECO:0000250" key="1"/>
<evidence type="ECO:0000250" key="2">
    <source>
        <dbReference type="UniProtKB" id="P17802"/>
    </source>
</evidence>
<evidence type="ECO:0000250" key="3">
    <source>
        <dbReference type="UniProtKB" id="P83847"/>
    </source>
</evidence>
<evidence type="ECO:0000305" key="4"/>
<reference key="1">
    <citation type="journal article" date="1993" name="J. Bacteriol.">
        <title>Nucleotide sequence of the Salmonella typhimurium mutB gene, the homolog of Escherichia coli mutY.</title>
        <authorList>
            <person name="Desiraju V."/>
            <person name="Shanabruch W.G."/>
            <person name="Lu A.L."/>
        </authorList>
    </citation>
    <scope>NUCLEOTIDE SEQUENCE [GENOMIC DNA]</scope>
    <source>
        <strain>GW1803</strain>
    </source>
</reference>
<reference key="2">
    <citation type="journal article" date="2001" name="Nature">
        <title>Complete genome sequence of Salmonella enterica serovar Typhimurium LT2.</title>
        <authorList>
            <person name="McClelland M."/>
            <person name="Sanderson K.E."/>
            <person name="Spieth J."/>
            <person name="Clifton S.W."/>
            <person name="Latreille P."/>
            <person name="Courtney L."/>
            <person name="Porwollik S."/>
            <person name="Ali J."/>
            <person name="Dante M."/>
            <person name="Du F."/>
            <person name="Hou S."/>
            <person name="Layman D."/>
            <person name="Leonard S."/>
            <person name="Nguyen C."/>
            <person name="Scott K."/>
            <person name="Holmes A."/>
            <person name="Grewal N."/>
            <person name="Mulvaney E."/>
            <person name="Ryan E."/>
            <person name="Sun H."/>
            <person name="Florea L."/>
            <person name="Miller W."/>
            <person name="Stoneking T."/>
            <person name="Nhan M."/>
            <person name="Waterston R."/>
            <person name="Wilson R.K."/>
        </authorList>
    </citation>
    <scope>NUCLEOTIDE SEQUENCE [LARGE SCALE GENOMIC DNA]</scope>
    <source>
        <strain>LT2 / SGSC1412 / ATCC 700720</strain>
    </source>
</reference>
<dbReference type="EC" id="3.2.2.31" evidence="2"/>
<dbReference type="EMBL" id="M86634">
    <property type="protein sequence ID" value="AAA27165.1"/>
    <property type="molecule type" value="Genomic_DNA"/>
</dbReference>
<dbReference type="EMBL" id="AE006468">
    <property type="protein sequence ID" value="AAL21985.1"/>
    <property type="molecule type" value="Genomic_DNA"/>
</dbReference>
<dbReference type="PIR" id="A40647">
    <property type="entry name" value="A40647"/>
</dbReference>
<dbReference type="RefSeq" id="NP_462026.1">
    <property type="nucleotide sequence ID" value="NC_003197.2"/>
</dbReference>
<dbReference type="RefSeq" id="WP_001148956.1">
    <property type="nucleotide sequence ID" value="NC_003197.2"/>
</dbReference>
<dbReference type="SMR" id="Q05869"/>
<dbReference type="STRING" id="99287.STM3110"/>
<dbReference type="PaxDb" id="99287-STM3110"/>
<dbReference type="GeneID" id="1254633"/>
<dbReference type="KEGG" id="stm:STM3110"/>
<dbReference type="PATRIC" id="fig|99287.12.peg.3296"/>
<dbReference type="HOGENOM" id="CLU_012862_0_2_6"/>
<dbReference type="OMA" id="EADWLWY"/>
<dbReference type="PhylomeDB" id="Q05869"/>
<dbReference type="BioCyc" id="SENT99287:STM3110-MONOMER"/>
<dbReference type="Proteomes" id="UP000001014">
    <property type="component" value="Chromosome"/>
</dbReference>
<dbReference type="GO" id="GO:0051539">
    <property type="term" value="F:4 iron, 4 sulfur cluster binding"/>
    <property type="evidence" value="ECO:0007669"/>
    <property type="project" value="UniProtKB-KW"/>
</dbReference>
<dbReference type="GO" id="GO:0034039">
    <property type="term" value="F:8-oxo-7,8-dihydroguanine DNA N-glycosylase activity"/>
    <property type="evidence" value="ECO:0000318"/>
    <property type="project" value="GO_Central"/>
</dbReference>
<dbReference type="GO" id="GO:0035485">
    <property type="term" value="F:adenine/guanine mispair binding"/>
    <property type="evidence" value="ECO:0000318"/>
    <property type="project" value="GO_Central"/>
</dbReference>
<dbReference type="GO" id="GO:0046872">
    <property type="term" value="F:metal ion binding"/>
    <property type="evidence" value="ECO:0007669"/>
    <property type="project" value="UniProtKB-KW"/>
</dbReference>
<dbReference type="GO" id="GO:0032357">
    <property type="term" value="F:oxidized purine DNA binding"/>
    <property type="evidence" value="ECO:0000318"/>
    <property type="project" value="GO_Central"/>
</dbReference>
<dbReference type="GO" id="GO:0000701">
    <property type="term" value="F:purine-specific mismatch base pair DNA N-glycosylase activity"/>
    <property type="evidence" value="ECO:0000318"/>
    <property type="project" value="GO_Central"/>
</dbReference>
<dbReference type="GO" id="GO:0006284">
    <property type="term" value="P:base-excision repair"/>
    <property type="evidence" value="ECO:0000318"/>
    <property type="project" value="GO_Central"/>
</dbReference>
<dbReference type="GO" id="GO:0006298">
    <property type="term" value="P:mismatch repair"/>
    <property type="evidence" value="ECO:0000318"/>
    <property type="project" value="GO_Central"/>
</dbReference>
<dbReference type="CDD" id="cd00056">
    <property type="entry name" value="ENDO3c"/>
    <property type="match status" value="1"/>
</dbReference>
<dbReference type="CDD" id="cd03431">
    <property type="entry name" value="NUDIX_DNA_Glycosylase_C-MutY"/>
    <property type="match status" value="1"/>
</dbReference>
<dbReference type="FunFam" id="1.10.1670.10:FF:000002">
    <property type="entry name" value="Adenine DNA glycosylase"/>
    <property type="match status" value="1"/>
</dbReference>
<dbReference type="FunFam" id="1.10.340.30:FF:000002">
    <property type="entry name" value="Adenine DNA glycosylase"/>
    <property type="match status" value="1"/>
</dbReference>
<dbReference type="FunFam" id="3.90.79.10:FF:000028">
    <property type="entry name" value="Adenine DNA glycosylase"/>
    <property type="match status" value="1"/>
</dbReference>
<dbReference type="Gene3D" id="1.10.1670.10">
    <property type="entry name" value="Helix-hairpin-Helix base-excision DNA repair enzymes (C-terminal)"/>
    <property type="match status" value="1"/>
</dbReference>
<dbReference type="Gene3D" id="1.10.340.30">
    <property type="entry name" value="Hypothetical protein, domain 2"/>
    <property type="match status" value="1"/>
</dbReference>
<dbReference type="Gene3D" id="3.90.79.10">
    <property type="entry name" value="Nucleoside Triphosphate Pyrophosphohydrolase"/>
    <property type="match status" value="1"/>
</dbReference>
<dbReference type="InterPro" id="IPR005760">
    <property type="entry name" value="A/G_AdeGlyc_MutY"/>
</dbReference>
<dbReference type="InterPro" id="IPR011257">
    <property type="entry name" value="DNA_glycosylase"/>
</dbReference>
<dbReference type="InterPro" id="IPR004036">
    <property type="entry name" value="Endonuclease-III-like_CS2"/>
</dbReference>
<dbReference type="InterPro" id="IPR003651">
    <property type="entry name" value="Endonuclease3_FeS-loop_motif"/>
</dbReference>
<dbReference type="InterPro" id="IPR004035">
    <property type="entry name" value="Endouclease-III_FeS-bd_BS"/>
</dbReference>
<dbReference type="InterPro" id="IPR003265">
    <property type="entry name" value="HhH-GPD_domain"/>
</dbReference>
<dbReference type="InterPro" id="IPR023170">
    <property type="entry name" value="HhH_base_excis_C"/>
</dbReference>
<dbReference type="InterPro" id="IPR000445">
    <property type="entry name" value="HhH_motif"/>
</dbReference>
<dbReference type="InterPro" id="IPR044298">
    <property type="entry name" value="MIG/MutY"/>
</dbReference>
<dbReference type="InterPro" id="IPR029119">
    <property type="entry name" value="MutY_C"/>
</dbReference>
<dbReference type="InterPro" id="IPR015797">
    <property type="entry name" value="NUDIX_hydrolase-like_dom_sf"/>
</dbReference>
<dbReference type="NCBIfam" id="TIGR01084">
    <property type="entry name" value="mutY"/>
    <property type="match status" value="1"/>
</dbReference>
<dbReference type="NCBIfam" id="NF008132">
    <property type="entry name" value="PRK10880.1"/>
    <property type="match status" value="1"/>
</dbReference>
<dbReference type="PANTHER" id="PTHR42944">
    <property type="entry name" value="ADENINE DNA GLYCOSYLASE"/>
    <property type="match status" value="1"/>
</dbReference>
<dbReference type="PANTHER" id="PTHR42944:SF1">
    <property type="entry name" value="ADENINE DNA GLYCOSYLASE"/>
    <property type="match status" value="1"/>
</dbReference>
<dbReference type="Pfam" id="PF00633">
    <property type="entry name" value="HHH"/>
    <property type="match status" value="1"/>
</dbReference>
<dbReference type="Pfam" id="PF00730">
    <property type="entry name" value="HhH-GPD"/>
    <property type="match status" value="1"/>
</dbReference>
<dbReference type="Pfam" id="PF14815">
    <property type="entry name" value="NUDIX_4"/>
    <property type="match status" value="1"/>
</dbReference>
<dbReference type="SMART" id="SM00478">
    <property type="entry name" value="ENDO3c"/>
    <property type="match status" value="1"/>
</dbReference>
<dbReference type="SMART" id="SM00525">
    <property type="entry name" value="FES"/>
    <property type="match status" value="1"/>
</dbReference>
<dbReference type="SUPFAM" id="SSF48150">
    <property type="entry name" value="DNA-glycosylase"/>
    <property type="match status" value="1"/>
</dbReference>
<dbReference type="SUPFAM" id="SSF55811">
    <property type="entry name" value="Nudix"/>
    <property type="match status" value="1"/>
</dbReference>
<dbReference type="PROSITE" id="PS00764">
    <property type="entry name" value="ENDONUCLEASE_III_1"/>
    <property type="match status" value="1"/>
</dbReference>
<dbReference type="PROSITE" id="PS01155">
    <property type="entry name" value="ENDONUCLEASE_III_2"/>
    <property type="match status" value="1"/>
</dbReference>